<protein>
    <recommendedName>
        <fullName evidence="1">3,4-dihydroxy-2-butanone 4-phosphate synthase</fullName>
        <shortName evidence="1">DHBP synthase</shortName>
        <ecNumber evidence="1">4.1.99.12</ecNumber>
    </recommendedName>
</protein>
<evidence type="ECO:0000255" key="1">
    <source>
        <dbReference type="HAMAP-Rule" id="MF_00180"/>
    </source>
</evidence>
<sequence length="230" mass="24185">MSNVVPTPVFPLFAQPFATRLERALQHLRIGRPVILMDDFDRENEADLIVAADKLTVPVMAQLIRDGSGIVCLCLPGETLDRLELPPMVDSNRSRYSTAFTVSIEAREGVTTGVSAVDRVTTIRAAIAPGARSGDVVSPGHVFPLRAQPGGVLTRRGHTEGSVDLAALAGLRPAGVLCELMNADGTMMRGASLERYAAKEGLVALAIDELAAHLQARGATGAPAELAVAA</sequence>
<comment type="function">
    <text evidence="1">Catalyzes the conversion of D-ribulose 5-phosphate to formate and 3,4-dihydroxy-2-butanone 4-phosphate.</text>
</comment>
<comment type="catalytic activity">
    <reaction evidence="1">
        <text>D-ribulose 5-phosphate = (2S)-2-hydroxy-3-oxobutyl phosphate + formate + H(+)</text>
        <dbReference type="Rhea" id="RHEA:18457"/>
        <dbReference type="ChEBI" id="CHEBI:15378"/>
        <dbReference type="ChEBI" id="CHEBI:15740"/>
        <dbReference type="ChEBI" id="CHEBI:58121"/>
        <dbReference type="ChEBI" id="CHEBI:58830"/>
        <dbReference type="EC" id="4.1.99.12"/>
    </reaction>
</comment>
<comment type="cofactor">
    <cofactor evidence="1">
        <name>Mg(2+)</name>
        <dbReference type="ChEBI" id="CHEBI:18420"/>
    </cofactor>
    <cofactor evidence="1">
        <name>Mn(2+)</name>
        <dbReference type="ChEBI" id="CHEBI:29035"/>
    </cofactor>
    <text evidence="1">Binds 2 divalent metal cations per subunit. Magnesium or manganese.</text>
</comment>
<comment type="pathway">
    <text evidence="1">Cofactor biosynthesis; riboflavin biosynthesis; 2-hydroxy-3-oxobutyl phosphate from D-ribulose 5-phosphate: step 1/1.</text>
</comment>
<comment type="subunit">
    <text evidence="1">Homodimer.</text>
</comment>
<comment type="similarity">
    <text evidence="1">Belongs to the DHBP synthase family.</text>
</comment>
<keyword id="KW-0456">Lyase</keyword>
<keyword id="KW-0460">Magnesium</keyword>
<keyword id="KW-0464">Manganese</keyword>
<keyword id="KW-0479">Metal-binding</keyword>
<keyword id="KW-1185">Reference proteome</keyword>
<keyword id="KW-0686">Riboflavin biosynthesis</keyword>
<gene>
    <name evidence="1" type="primary">ribB</name>
    <name type="ordered locus">BP0471</name>
</gene>
<feature type="chain" id="PRO_0000151790" description="3,4-dihydroxy-2-butanone 4-phosphate synthase">
    <location>
        <begin position="1"/>
        <end position="230"/>
    </location>
</feature>
<feature type="binding site" evidence="1">
    <location>
        <begin position="42"/>
        <end position="43"/>
    </location>
    <ligand>
        <name>D-ribulose 5-phosphate</name>
        <dbReference type="ChEBI" id="CHEBI:58121"/>
    </ligand>
</feature>
<feature type="binding site" evidence="1">
    <location>
        <position position="43"/>
    </location>
    <ligand>
        <name>Mg(2+)</name>
        <dbReference type="ChEBI" id="CHEBI:18420"/>
        <label>1</label>
    </ligand>
</feature>
<feature type="binding site" evidence="1">
    <location>
        <position position="43"/>
    </location>
    <ligand>
        <name>Mg(2+)</name>
        <dbReference type="ChEBI" id="CHEBI:18420"/>
        <label>2</label>
    </ligand>
</feature>
<feature type="binding site" evidence="1">
    <location>
        <position position="47"/>
    </location>
    <ligand>
        <name>D-ribulose 5-phosphate</name>
        <dbReference type="ChEBI" id="CHEBI:58121"/>
    </ligand>
</feature>
<feature type="binding site" evidence="1">
    <location>
        <begin position="155"/>
        <end position="159"/>
    </location>
    <ligand>
        <name>D-ribulose 5-phosphate</name>
        <dbReference type="ChEBI" id="CHEBI:58121"/>
    </ligand>
</feature>
<feature type="binding site" evidence="1">
    <location>
        <position position="158"/>
    </location>
    <ligand>
        <name>Mg(2+)</name>
        <dbReference type="ChEBI" id="CHEBI:18420"/>
        <label>2</label>
    </ligand>
</feature>
<feature type="binding site" evidence="1">
    <location>
        <position position="179"/>
    </location>
    <ligand>
        <name>D-ribulose 5-phosphate</name>
        <dbReference type="ChEBI" id="CHEBI:58121"/>
    </ligand>
</feature>
<feature type="site" description="Essential for catalytic activity" evidence="1">
    <location>
        <position position="141"/>
    </location>
</feature>
<feature type="site" description="Essential for catalytic activity" evidence="1">
    <location>
        <position position="179"/>
    </location>
</feature>
<reference key="1">
    <citation type="journal article" date="2003" name="Nat. Genet.">
        <title>Comparative analysis of the genome sequences of Bordetella pertussis, Bordetella parapertussis and Bordetella bronchiseptica.</title>
        <authorList>
            <person name="Parkhill J."/>
            <person name="Sebaihia M."/>
            <person name="Preston A."/>
            <person name="Murphy L.D."/>
            <person name="Thomson N.R."/>
            <person name="Harris D.E."/>
            <person name="Holden M.T.G."/>
            <person name="Churcher C.M."/>
            <person name="Bentley S.D."/>
            <person name="Mungall K.L."/>
            <person name="Cerdeno-Tarraga A.-M."/>
            <person name="Temple L."/>
            <person name="James K.D."/>
            <person name="Harris B."/>
            <person name="Quail M.A."/>
            <person name="Achtman M."/>
            <person name="Atkin R."/>
            <person name="Baker S."/>
            <person name="Basham D."/>
            <person name="Bason N."/>
            <person name="Cherevach I."/>
            <person name="Chillingworth T."/>
            <person name="Collins M."/>
            <person name="Cronin A."/>
            <person name="Davis P."/>
            <person name="Doggett J."/>
            <person name="Feltwell T."/>
            <person name="Goble A."/>
            <person name="Hamlin N."/>
            <person name="Hauser H."/>
            <person name="Holroyd S."/>
            <person name="Jagels K."/>
            <person name="Leather S."/>
            <person name="Moule S."/>
            <person name="Norberczak H."/>
            <person name="O'Neil S."/>
            <person name="Ormond D."/>
            <person name="Price C."/>
            <person name="Rabbinowitsch E."/>
            <person name="Rutter S."/>
            <person name="Sanders M."/>
            <person name="Saunders D."/>
            <person name="Seeger K."/>
            <person name="Sharp S."/>
            <person name="Simmonds M."/>
            <person name="Skelton J."/>
            <person name="Squares R."/>
            <person name="Squares S."/>
            <person name="Stevens K."/>
            <person name="Unwin L."/>
            <person name="Whitehead S."/>
            <person name="Barrell B.G."/>
            <person name="Maskell D.J."/>
        </authorList>
    </citation>
    <scope>NUCLEOTIDE SEQUENCE [LARGE SCALE GENOMIC DNA]</scope>
    <source>
        <strain>Tohama I / ATCC BAA-589 / NCTC 13251</strain>
    </source>
</reference>
<organism>
    <name type="scientific">Bordetella pertussis (strain Tohama I / ATCC BAA-589 / NCTC 13251)</name>
    <dbReference type="NCBI Taxonomy" id="257313"/>
    <lineage>
        <taxon>Bacteria</taxon>
        <taxon>Pseudomonadati</taxon>
        <taxon>Pseudomonadota</taxon>
        <taxon>Betaproteobacteria</taxon>
        <taxon>Burkholderiales</taxon>
        <taxon>Alcaligenaceae</taxon>
        <taxon>Bordetella</taxon>
    </lineage>
</organism>
<name>RIBB_BORPE</name>
<accession>Q7VSF4</accession>
<dbReference type="EC" id="4.1.99.12" evidence="1"/>
<dbReference type="EMBL" id="BX640412">
    <property type="protein sequence ID" value="CAE44801.1"/>
    <property type="molecule type" value="Genomic_DNA"/>
</dbReference>
<dbReference type="RefSeq" id="NP_879328.1">
    <property type="nucleotide sequence ID" value="NC_002929.2"/>
</dbReference>
<dbReference type="RefSeq" id="WP_010929826.1">
    <property type="nucleotide sequence ID" value="NZ_CP039022.1"/>
</dbReference>
<dbReference type="SMR" id="Q7VSF4"/>
<dbReference type="STRING" id="257313.BP0471"/>
<dbReference type="PaxDb" id="257313-BP0471"/>
<dbReference type="GeneID" id="69600180"/>
<dbReference type="KEGG" id="bpe:BP0471"/>
<dbReference type="PATRIC" id="fig|257313.5.peg.510"/>
<dbReference type="eggNOG" id="COG0108">
    <property type="taxonomic scope" value="Bacteria"/>
</dbReference>
<dbReference type="HOGENOM" id="CLU_020273_3_0_4"/>
<dbReference type="UniPathway" id="UPA00275">
    <property type="reaction ID" value="UER00399"/>
</dbReference>
<dbReference type="Proteomes" id="UP000002676">
    <property type="component" value="Chromosome"/>
</dbReference>
<dbReference type="GO" id="GO:0005829">
    <property type="term" value="C:cytosol"/>
    <property type="evidence" value="ECO:0007669"/>
    <property type="project" value="TreeGrafter"/>
</dbReference>
<dbReference type="GO" id="GO:0008686">
    <property type="term" value="F:3,4-dihydroxy-2-butanone-4-phosphate synthase activity"/>
    <property type="evidence" value="ECO:0007669"/>
    <property type="project" value="UniProtKB-UniRule"/>
</dbReference>
<dbReference type="GO" id="GO:0000287">
    <property type="term" value="F:magnesium ion binding"/>
    <property type="evidence" value="ECO:0007669"/>
    <property type="project" value="UniProtKB-UniRule"/>
</dbReference>
<dbReference type="GO" id="GO:0030145">
    <property type="term" value="F:manganese ion binding"/>
    <property type="evidence" value="ECO:0007669"/>
    <property type="project" value="UniProtKB-UniRule"/>
</dbReference>
<dbReference type="GO" id="GO:0009231">
    <property type="term" value="P:riboflavin biosynthetic process"/>
    <property type="evidence" value="ECO:0007669"/>
    <property type="project" value="UniProtKB-UniRule"/>
</dbReference>
<dbReference type="Gene3D" id="3.90.870.10">
    <property type="entry name" value="DHBP synthase"/>
    <property type="match status" value="1"/>
</dbReference>
<dbReference type="HAMAP" id="MF_00180">
    <property type="entry name" value="RibB"/>
    <property type="match status" value="1"/>
</dbReference>
<dbReference type="InterPro" id="IPR017945">
    <property type="entry name" value="DHBP_synth_RibB-like_a/b_dom"/>
</dbReference>
<dbReference type="InterPro" id="IPR000422">
    <property type="entry name" value="DHBP_synthase_RibB"/>
</dbReference>
<dbReference type="NCBIfam" id="TIGR00506">
    <property type="entry name" value="ribB"/>
    <property type="match status" value="1"/>
</dbReference>
<dbReference type="PANTHER" id="PTHR21327:SF38">
    <property type="entry name" value="3,4-DIHYDROXY-2-BUTANONE 4-PHOSPHATE SYNTHASE"/>
    <property type="match status" value="1"/>
</dbReference>
<dbReference type="PANTHER" id="PTHR21327">
    <property type="entry name" value="GTP CYCLOHYDROLASE II-RELATED"/>
    <property type="match status" value="1"/>
</dbReference>
<dbReference type="Pfam" id="PF00926">
    <property type="entry name" value="DHBP_synthase"/>
    <property type="match status" value="1"/>
</dbReference>
<dbReference type="SUPFAM" id="SSF55821">
    <property type="entry name" value="YrdC/RibB"/>
    <property type="match status" value="1"/>
</dbReference>
<proteinExistence type="inferred from homology"/>